<keyword id="KW-0240">DNA-directed RNA polymerase</keyword>
<keyword id="KW-0460">Magnesium</keyword>
<keyword id="KW-0479">Metal-binding</keyword>
<keyword id="KW-0548">Nucleotidyltransferase</keyword>
<keyword id="KW-0804">Transcription</keyword>
<keyword id="KW-0808">Transferase</keyword>
<keyword id="KW-0862">Zinc</keyword>
<gene>
    <name evidence="1" type="primary">rpoC</name>
    <name type="ordered locus">C8J_0452</name>
</gene>
<feature type="chain" id="PRO_1000073242" description="DNA-directed RNA polymerase subunit beta'">
    <location>
        <begin position="1"/>
        <end position="1517"/>
    </location>
</feature>
<feature type="binding site" evidence="1">
    <location>
        <position position="71"/>
    </location>
    <ligand>
        <name>Zn(2+)</name>
        <dbReference type="ChEBI" id="CHEBI:29105"/>
        <label>1</label>
    </ligand>
</feature>
<feature type="binding site" evidence="1">
    <location>
        <position position="73"/>
    </location>
    <ligand>
        <name>Zn(2+)</name>
        <dbReference type="ChEBI" id="CHEBI:29105"/>
        <label>1</label>
    </ligand>
</feature>
<feature type="binding site" evidence="1">
    <location>
        <position position="86"/>
    </location>
    <ligand>
        <name>Zn(2+)</name>
        <dbReference type="ChEBI" id="CHEBI:29105"/>
        <label>1</label>
    </ligand>
</feature>
<feature type="binding site" evidence="1">
    <location>
        <position position="89"/>
    </location>
    <ligand>
        <name>Zn(2+)</name>
        <dbReference type="ChEBI" id="CHEBI:29105"/>
        <label>1</label>
    </ligand>
</feature>
<feature type="binding site" evidence="1">
    <location>
        <position position="482"/>
    </location>
    <ligand>
        <name>Mg(2+)</name>
        <dbReference type="ChEBI" id="CHEBI:18420"/>
    </ligand>
</feature>
<feature type="binding site" evidence="1">
    <location>
        <position position="484"/>
    </location>
    <ligand>
        <name>Mg(2+)</name>
        <dbReference type="ChEBI" id="CHEBI:18420"/>
    </ligand>
</feature>
<feature type="binding site" evidence="1">
    <location>
        <position position="486"/>
    </location>
    <ligand>
        <name>Mg(2+)</name>
        <dbReference type="ChEBI" id="CHEBI:18420"/>
    </ligand>
</feature>
<feature type="binding site" evidence="1">
    <location>
        <position position="812"/>
    </location>
    <ligand>
        <name>Zn(2+)</name>
        <dbReference type="ChEBI" id="CHEBI:29105"/>
        <label>2</label>
    </ligand>
</feature>
<feature type="binding site" evidence="1">
    <location>
        <position position="886"/>
    </location>
    <ligand>
        <name>Zn(2+)</name>
        <dbReference type="ChEBI" id="CHEBI:29105"/>
        <label>2</label>
    </ligand>
</feature>
<feature type="binding site" evidence="1">
    <location>
        <position position="893"/>
    </location>
    <ligand>
        <name>Zn(2+)</name>
        <dbReference type="ChEBI" id="CHEBI:29105"/>
        <label>2</label>
    </ligand>
</feature>
<feature type="binding site" evidence="1">
    <location>
        <position position="896"/>
    </location>
    <ligand>
        <name>Zn(2+)</name>
        <dbReference type="ChEBI" id="CHEBI:29105"/>
        <label>2</label>
    </ligand>
</feature>
<dbReference type="EC" id="2.7.7.6" evidence="1"/>
<dbReference type="EMBL" id="CP000814">
    <property type="protein sequence ID" value="ABV52051.1"/>
    <property type="molecule type" value="Genomic_DNA"/>
</dbReference>
<dbReference type="RefSeq" id="WP_002866974.1">
    <property type="nucleotide sequence ID" value="NC_009839.1"/>
</dbReference>
<dbReference type="SMR" id="A8FKR4"/>
<dbReference type="KEGG" id="cju:C8J_0452"/>
<dbReference type="HOGENOM" id="CLU_000524_3_1_7"/>
<dbReference type="GO" id="GO:0000428">
    <property type="term" value="C:DNA-directed RNA polymerase complex"/>
    <property type="evidence" value="ECO:0007669"/>
    <property type="project" value="UniProtKB-KW"/>
</dbReference>
<dbReference type="GO" id="GO:0003677">
    <property type="term" value="F:DNA binding"/>
    <property type="evidence" value="ECO:0007669"/>
    <property type="project" value="UniProtKB-UniRule"/>
</dbReference>
<dbReference type="GO" id="GO:0003899">
    <property type="term" value="F:DNA-directed RNA polymerase activity"/>
    <property type="evidence" value="ECO:0007669"/>
    <property type="project" value="UniProtKB-UniRule"/>
</dbReference>
<dbReference type="GO" id="GO:0000287">
    <property type="term" value="F:magnesium ion binding"/>
    <property type="evidence" value="ECO:0007669"/>
    <property type="project" value="UniProtKB-UniRule"/>
</dbReference>
<dbReference type="GO" id="GO:0008270">
    <property type="term" value="F:zinc ion binding"/>
    <property type="evidence" value="ECO:0007669"/>
    <property type="project" value="UniProtKB-UniRule"/>
</dbReference>
<dbReference type="GO" id="GO:0006351">
    <property type="term" value="P:DNA-templated transcription"/>
    <property type="evidence" value="ECO:0007669"/>
    <property type="project" value="UniProtKB-UniRule"/>
</dbReference>
<dbReference type="CDD" id="cd02655">
    <property type="entry name" value="RNAP_beta'_C"/>
    <property type="match status" value="1"/>
</dbReference>
<dbReference type="CDD" id="cd01609">
    <property type="entry name" value="RNAP_beta'_N"/>
    <property type="match status" value="1"/>
</dbReference>
<dbReference type="FunFam" id="1.10.132.30:FF:000003">
    <property type="entry name" value="DNA-directed RNA polymerase subunit beta"/>
    <property type="match status" value="1"/>
</dbReference>
<dbReference type="Gene3D" id="1.10.132.30">
    <property type="match status" value="1"/>
</dbReference>
<dbReference type="Gene3D" id="1.10.150.390">
    <property type="match status" value="1"/>
</dbReference>
<dbReference type="Gene3D" id="1.10.1790.20">
    <property type="match status" value="1"/>
</dbReference>
<dbReference type="Gene3D" id="1.10.40.90">
    <property type="match status" value="1"/>
</dbReference>
<dbReference type="Gene3D" id="2.40.40.20">
    <property type="match status" value="1"/>
</dbReference>
<dbReference type="Gene3D" id="2.40.50.100">
    <property type="match status" value="3"/>
</dbReference>
<dbReference type="Gene3D" id="4.10.860.120">
    <property type="entry name" value="RNA polymerase II, clamp domain"/>
    <property type="match status" value="1"/>
</dbReference>
<dbReference type="Gene3D" id="1.10.274.100">
    <property type="entry name" value="RNA polymerase Rpb1, domain 3"/>
    <property type="match status" value="1"/>
</dbReference>
<dbReference type="HAMAP" id="MF_01322">
    <property type="entry name" value="RNApol_bact_RpoC"/>
    <property type="match status" value="1"/>
</dbReference>
<dbReference type="InterPro" id="IPR045867">
    <property type="entry name" value="DNA-dir_RpoC_beta_prime"/>
</dbReference>
<dbReference type="InterPro" id="IPR012754">
    <property type="entry name" value="DNA-dir_RpoC_beta_prime_bact"/>
</dbReference>
<dbReference type="InterPro" id="IPR000722">
    <property type="entry name" value="RNA_pol_asu"/>
</dbReference>
<dbReference type="InterPro" id="IPR006592">
    <property type="entry name" value="RNA_pol_N"/>
</dbReference>
<dbReference type="InterPro" id="IPR007080">
    <property type="entry name" value="RNA_pol_Rpb1_1"/>
</dbReference>
<dbReference type="InterPro" id="IPR007066">
    <property type="entry name" value="RNA_pol_Rpb1_3"/>
</dbReference>
<dbReference type="InterPro" id="IPR042102">
    <property type="entry name" value="RNA_pol_Rpb1_3_sf"/>
</dbReference>
<dbReference type="InterPro" id="IPR007083">
    <property type="entry name" value="RNA_pol_Rpb1_4"/>
</dbReference>
<dbReference type="InterPro" id="IPR007081">
    <property type="entry name" value="RNA_pol_Rpb1_5"/>
</dbReference>
<dbReference type="InterPro" id="IPR044893">
    <property type="entry name" value="RNA_pol_Rpb1_clamp_domain"/>
</dbReference>
<dbReference type="InterPro" id="IPR038120">
    <property type="entry name" value="Rpb1_funnel_sf"/>
</dbReference>
<dbReference type="NCBIfam" id="TIGR02386">
    <property type="entry name" value="rpoC_TIGR"/>
    <property type="match status" value="1"/>
</dbReference>
<dbReference type="PANTHER" id="PTHR19376">
    <property type="entry name" value="DNA-DIRECTED RNA POLYMERASE"/>
    <property type="match status" value="1"/>
</dbReference>
<dbReference type="PANTHER" id="PTHR19376:SF54">
    <property type="entry name" value="DNA-DIRECTED RNA POLYMERASE SUBUNIT BETA"/>
    <property type="match status" value="1"/>
</dbReference>
<dbReference type="Pfam" id="PF04997">
    <property type="entry name" value="RNA_pol_Rpb1_1"/>
    <property type="match status" value="1"/>
</dbReference>
<dbReference type="Pfam" id="PF00623">
    <property type="entry name" value="RNA_pol_Rpb1_2"/>
    <property type="match status" value="2"/>
</dbReference>
<dbReference type="Pfam" id="PF04983">
    <property type="entry name" value="RNA_pol_Rpb1_3"/>
    <property type="match status" value="1"/>
</dbReference>
<dbReference type="Pfam" id="PF05000">
    <property type="entry name" value="RNA_pol_Rpb1_4"/>
    <property type="match status" value="1"/>
</dbReference>
<dbReference type="Pfam" id="PF04998">
    <property type="entry name" value="RNA_pol_Rpb1_5"/>
    <property type="match status" value="1"/>
</dbReference>
<dbReference type="SMART" id="SM00663">
    <property type="entry name" value="RPOLA_N"/>
    <property type="match status" value="1"/>
</dbReference>
<dbReference type="SUPFAM" id="SSF64484">
    <property type="entry name" value="beta and beta-prime subunits of DNA dependent RNA-polymerase"/>
    <property type="match status" value="1"/>
</dbReference>
<name>RPOC_CAMJ8</name>
<sequence>MSKFKVIEIKEDARPRDFEAFQLRLASPEKIKSWSYGEVKKPETINYRTLKPERDGLFCAKIFGPIRDYECLCGKYKKMRFKGVKCEKCGVEVANSKVRRSRMGHIELVTPVAHIWYVNSLPSRIGTLLGVKMKDLERVLYYEAYIVENPGDAFYDNESTKKVEYCDVLNEEQYQNLMQRYENSGFKARMGGEVVRDLLANLDLVALLNQLKEEMAATNSEAKKKTIIKRLKVVENFLNSNLNANADSDEAVPNRPEWMMITNLPVLPPDLRPLVALDGGKFAVSDVNDLYRRVINRNTRLKKLMELDAPEIIIRNEKRMLQEAVDALFDNGRRANAVKGANKRPLKSLSEIIKGKQGRFRQNLLGKRVDFSGRSVIVVGPKLRMDQCGLPKKMALELFKPHLLAKLEEKGYATTVKQAKKMIENKTNEVWECLEEVVKGHPVMLNRAPTLHKLSIQAFHPVLVEGKAIQLHPLVCAAFNADFDGDQMAVHVPLSQEAIAECKVLMLSSMNILLPASGKSVTVPSQDMVLGIYYLSLEKAGAKGSHKICTGIDEVMMALESKCLDIHASIQTMVDGRKITTTAGRLIIKSILPDFVPENSWNKVLKKKDIAALVDYVYKQGGLEITASFLDRLKNLGFEYATKAGISISIADIIVPNDKQKAIDEAKKQVREIQNSYNLGLITSGERYNKIIDIWKSTNNVLSKEMMKLVEKDKEGFNSIYMMADSGARGSAAQISQLAAMRGLMTKPDGSIIETPIISNFREGLNVLEYFISTHGARKGLADTALKTANAGYLTRKLIDVAQNVKITIEDCGTHEGVEINEITADSSIIETLEERILGRVLAEDVIDPITNSVLFAEGTLMDEEKAKILGESGIKSVNIRTPITCKAKKGICAKCYGINLGEGKLVKPGEAVGIISAQSIGEPGTQLTLRTFHSGGTASTDLQDRQVSAQKEGFIRFYNLKTYKNKEGKNIVANRRNAAILLVEPKIKTPFKGVINIENIHEDVIVSIKNKKQEVKYILRKYDLAKPNELAGVSGSIDGKLYLPYQSGMQVEENESIVEVIKEGWNVPNRIPFASEILVEDGEPVVQNIKAGEKGTLKFYILKGDGLDRVKNVKKGDIVKEKGFFVVIADENDREAKRHYIPRESKIEFNDSEKIDDANTIIASAPKKERKVIAEWDAYNNTIIAEIDGVVSFEDIEAGYSADEQIDEATGKRSLVINEYLPSGVRPTLVIAGKGDKAVRYQLEPKTVIFVHDGDKIAQADILAKTPKAAAKSKDITGGLPRVSELFEARKPKNAAVIAEIDGVVRFDKPLRSKERIIIQAEDGTSAEYLIDKSKHIQVRDGEFIHAGEKLTDGVVSSHDVLKILGEKALHYYLISEIQQVYRGQGVVISDKHIEVIVSQMLRQVKVVDSGHTKFIEGDLVSRRKFREENERIIRMGGEPAIAEPVLLGVTRAAIGSDSVISAASFQETTKVLTEASIAGKFDYLEDLKENVILGRMIPVGTGLYGEQNLKLKEQE</sequence>
<accession>A8FKR4</accession>
<evidence type="ECO:0000255" key="1">
    <source>
        <dbReference type="HAMAP-Rule" id="MF_01322"/>
    </source>
</evidence>
<organism>
    <name type="scientific">Campylobacter jejuni subsp. jejuni serotype O:6 (strain 81116 / NCTC 11828)</name>
    <dbReference type="NCBI Taxonomy" id="407148"/>
    <lineage>
        <taxon>Bacteria</taxon>
        <taxon>Pseudomonadati</taxon>
        <taxon>Campylobacterota</taxon>
        <taxon>Epsilonproteobacteria</taxon>
        <taxon>Campylobacterales</taxon>
        <taxon>Campylobacteraceae</taxon>
        <taxon>Campylobacter</taxon>
    </lineage>
</organism>
<proteinExistence type="inferred from homology"/>
<protein>
    <recommendedName>
        <fullName evidence="1">DNA-directed RNA polymerase subunit beta'</fullName>
        <shortName evidence="1">RNAP subunit beta'</shortName>
        <ecNumber evidence="1">2.7.7.6</ecNumber>
    </recommendedName>
    <alternativeName>
        <fullName evidence="1">RNA polymerase subunit beta'</fullName>
    </alternativeName>
    <alternativeName>
        <fullName evidence="1">Transcriptase subunit beta'</fullName>
    </alternativeName>
</protein>
<reference key="1">
    <citation type="journal article" date="2007" name="J. Bacteriol.">
        <title>The complete genome sequence of Campylobacter jejuni strain 81116 (NCTC11828).</title>
        <authorList>
            <person name="Pearson B.M."/>
            <person name="Gaskin D.J.H."/>
            <person name="Segers R.P.A.M."/>
            <person name="Wells J.M."/>
            <person name="Nuijten P.J.M."/>
            <person name="van Vliet A.H.M."/>
        </authorList>
    </citation>
    <scope>NUCLEOTIDE SEQUENCE [LARGE SCALE GENOMIC DNA]</scope>
    <source>
        <strain>81116 / NCTC 11828</strain>
    </source>
</reference>
<comment type="function">
    <text evidence="1">DNA-dependent RNA polymerase catalyzes the transcription of DNA into RNA using the four ribonucleoside triphosphates as substrates.</text>
</comment>
<comment type="catalytic activity">
    <reaction evidence="1">
        <text>RNA(n) + a ribonucleoside 5'-triphosphate = RNA(n+1) + diphosphate</text>
        <dbReference type="Rhea" id="RHEA:21248"/>
        <dbReference type="Rhea" id="RHEA-COMP:14527"/>
        <dbReference type="Rhea" id="RHEA-COMP:17342"/>
        <dbReference type="ChEBI" id="CHEBI:33019"/>
        <dbReference type="ChEBI" id="CHEBI:61557"/>
        <dbReference type="ChEBI" id="CHEBI:140395"/>
        <dbReference type="EC" id="2.7.7.6"/>
    </reaction>
</comment>
<comment type="cofactor">
    <cofactor evidence="1">
        <name>Mg(2+)</name>
        <dbReference type="ChEBI" id="CHEBI:18420"/>
    </cofactor>
    <text evidence="1">Binds 1 Mg(2+) ion per subunit.</text>
</comment>
<comment type="cofactor">
    <cofactor evidence="1">
        <name>Zn(2+)</name>
        <dbReference type="ChEBI" id="CHEBI:29105"/>
    </cofactor>
    <text evidence="1">Binds 2 Zn(2+) ions per subunit.</text>
</comment>
<comment type="subunit">
    <text evidence="1">The RNAP catalytic core consists of 2 alpha, 1 beta, 1 beta' and 1 omega subunit. When a sigma factor is associated with the core the holoenzyme is formed, which can initiate transcription.</text>
</comment>
<comment type="similarity">
    <text evidence="1">Belongs to the RNA polymerase beta' chain family.</text>
</comment>